<accession>Q58F56</accession>
<name>CYB_MYSTU</name>
<reference key="1">
    <citation type="submission" date="2005-03" db="EMBL/GenBank/DDBJ databases">
        <title>Complete mitochondrial genome for a short tailed bat from New Zealand.</title>
        <authorList>
            <person name="Sandbrook D."/>
            <person name="McLenachan P."/>
            <person name="Penny D."/>
        </authorList>
    </citation>
    <scope>NUCLEOTIDE SEQUENCE [GENOMIC DNA]</scope>
</reference>
<organism>
    <name type="scientific">Mystacina tuberculata</name>
    <name type="common">New Zealand lesser short-tailed bat</name>
    <dbReference type="NCBI Taxonomy" id="94961"/>
    <lineage>
        <taxon>Eukaryota</taxon>
        <taxon>Metazoa</taxon>
        <taxon>Chordata</taxon>
        <taxon>Craniata</taxon>
        <taxon>Vertebrata</taxon>
        <taxon>Euteleostomi</taxon>
        <taxon>Mammalia</taxon>
        <taxon>Eutheria</taxon>
        <taxon>Laurasiatheria</taxon>
        <taxon>Chiroptera</taxon>
        <taxon>Yangochiroptera</taxon>
        <taxon>Mystacinidae</taxon>
        <taxon>Mystacina</taxon>
    </lineage>
</organism>
<evidence type="ECO:0000250" key="1"/>
<evidence type="ECO:0000250" key="2">
    <source>
        <dbReference type="UniProtKB" id="P00157"/>
    </source>
</evidence>
<evidence type="ECO:0000255" key="3">
    <source>
        <dbReference type="PROSITE-ProRule" id="PRU00967"/>
    </source>
</evidence>
<evidence type="ECO:0000255" key="4">
    <source>
        <dbReference type="PROSITE-ProRule" id="PRU00968"/>
    </source>
</evidence>
<comment type="function">
    <text evidence="2">Component of the ubiquinol-cytochrome c reductase complex (complex III or cytochrome b-c1 complex) that is part of the mitochondrial respiratory chain. The b-c1 complex mediates electron transfer from ubiquinol to cytochrome c. Contributes to the generation of a proton gradient across the mitochondrial membrane that is then used for ATP synthesis.</text>
</comment>
<comment type="cofactor">
    <cofactor evidence="2">
        <name>heme b</name>
        <dbReference type="ChEBI" id="CHEBI:60344"/>
    </cofactor>
    <text evidence="2">Binds 2 heme b groups non-covalently.</text>
</comment>
<comment type="subunit">
    <text evidence="2">The cytochrome bc1 complex contains 11 subunits: 3 respiratory subunits (MT-CYB, CYC1 and UQCRFS1), 2 core proteins (UQCRC1 and UQCRC2) and 6 low-molecular weight proteins (UQCRH/QCR6, UQCRB/QCR7, UQCRQ/QCR8, UQCR10/QCR9, UQCR11/QCR10 and a cleavage product of UQCRFS1). This cytochrome bc1 complex then forms a dimer.</text>
</comment>
<comment type="subcellular location">
    <subcellularLocation>
        <location evidence="2">Mitochondrion inner membrane</location>
        <topology evidence="2">Multi-pass membrane protein</topology>
    </subcellularLocation>
</comment>
<comment type="miscellaneous">
    <text evidence="1">Heme 1 (or BL or b562) is low-potential and absorbs at about 562 nm, and heme 2 (or BH or b566) is high-potential and absorbs at about 566 nm.</text>
</comment>
<comment type="similarity">
    <text evidence="3 4">Belongs to the cytochrome b family.</text>
</comment>
<comment type="caution">
    <text evidence="2">The full-length protein contains only eight transmembrane helices, not nine as predicted by bioinformatics tools.</text>
</comment>
<geneLocation type="mitochondrion"/>
<feature type="chain" id="PRO_0000254832" description="Cytochrome b">
    <location>
        <begin position="1"/>
        <end position="379"/>
    </location>
</feature>
<feature type="transmembrane region" description="Helical" evidence="2">
    <location>
        <begin position="33"/>
        <end position="53"/>
    </location>
</feature>
<feature type="transmembrane region" description="Helical" evidence="2">
    <location>
        <begin position="77"/>
        <end position="98"/>
    </location>
</feature>
<feature type="transmembrane region" description="Helical" evidence="2">
    <location>
        <begin position="113"/>
        <end position="133"/>
    </location>
</feature>
<feature type="transmembrane region" description="Helical" evidence="2">
    <location>
        <begin position="178"/>
        <end position="198"/>
    </location>
</feature>
<feature type="transmembrane region" description="Helical" evidence="2">
    <location>
        <begin position="226"/>
        <end position="246"/>
    </location>
</feature>
<feature type="transmembrane region" description="Helical" evidence="2">
    <location>
        <begin position="288"/>
        <end position="308"/>
    </location>
</feature>
<feature type="transmembrane region" description="Helical" evidence="2">
    <location>
        <begin position="320"/>
        <end position="340"/>
    </location>
</feature>
<feature type="transmembrane region" description="Helical" evidence="2">
    <location>
        <begin position="347"/>
        <end position="367"/>
    </location>
</feature>
<feature type="binding site" description="axial binding residue" evidence="2">
    <location>
        <position position="83"/>
    </location>
    <ligand>
        <name>heme b</name>
        <dbReference type="ChEBI" id="CHEBI:60344"/>
        <label>b562</label>
    </ligand>
    <ligandPart>
        <name>Fe</name>
        <dbReference type="ChEBI" id="CHEBI:18248"/>
    </ligandPart>
</feature>
<feature type="binding site" description="axial binding residue" evidence="2">
    <location>
        <position position="97"/>
    </location>
    <ligand>
        <name>heme b</name>
        <dbReference type="ChEBI" id="CHEBI:60344"/>
        <label>b566</label>
    </ligand>
    <ligandPart>
        <name>Fe</name>
        <dbReference type="ChEBI" id="CHEBI:18248"/>
    </ligandPart>
</feature>
<feature type="binding site" description="axial binding residue" evidence="2">
    <location>
        <position position="182"/>
    </location>
    <ligand>
        <name>heme b</name>
        <dbReference type="ChEBI" id="CHEBI:60344"/>
        <label>b562</label>
    </ligand>
    <ligandPart>
        <name>Fe</name>
        <dbReference type="ChEBI" id="CHEBI:18248"/>
    </ligandPart>
</feature>
<feature type="binding site" description="axial binding residue" evidence="2">
    <location>
        <position position="196"/>
    </location>
    <ligand>
        <name>heme b</name>
        <dbReference type="ChEBI" id="CHEBI:60344"/>
        <label>b566</label>
    </ligand>
    <ligandPart>
        <name>Fe</name>
        <dbReference type="ChEBI" id="CHEBI:18248"/>
    </ligandPart>
</feature>
<feature type="binding site" evidence="2">
    <location>
        <position position="201"/>
    </location>
    <ligand>
        <name>a ubiquinone</name>
        <dbReference type="ChEBI" id="CHEBI:16389"/>
    </ligand>
</feature>
<sequence length="379" mass="42673">MTNIRKTHPLLKIVNTSFVDLPAPSSLSSWWNFGSLLTICLAVQIATGLFLAMHYTADIETAFSSVSHICRDVNYGWLLRYLHANGASMFFICLYLHVGRGLYYGSYMFLETWNVGVALLFAVMATAFLGYVLPWGQMSFWGATVITNLLSAIPYVGTDMVQWVWGGYAVDKATLTRFFAFHFILPFIIAALVMVHFLFLHETGSNNPTGIPSDLDLIPFHPYYTIKDILGFVFMLTALLTLVFFSPDLLGDPDNYSPANPLSTPLHIKPEWYFLFAYTILRSIPNKLGGVLALVLSILILVALPMLHTSKQRSMTFRPISQFLFWLLVADLLTLTWIGGQPVEHPYMLIGQTASILYFSLILIFMPLAGIAENHLMKW</sequence>
<proteinExistence type="inferred from homology"/>
<dbReference type="EMBL" id="AY960981">
    <property type="protein sequence ID" value="AAX50188.1"/>
    <property type="molecule type" value="Genomic_DNA"/>
</dbReference>
<dbReference type="RefSeq" id="YP_220705.1">
    <property type="nucleotide sequence ID" value="NC_006925.1"/>
</dbReference>
<dbReference type="SMR" id="Q58F56"/>
<dbReference type="GeneID" id="3338958"/>
<dbReference type="CTD" id="4519"/>
<dbReference type="GO" id="GO:0005743">
    <property type="term" value="C:mitochondrial inner membrane"/>
    <property type="evidence" value="ECO:0007669"/>
    <property type="project" value="UniProtKB-SubCell"/>
</dbReference>
<dbReference type="GO" id="GO:0045275">
    <property type="term" value="C:respiratory chain complex III"/>
    <property type="evidence" value="ECO:0007669"/>
    <property type="project" value="InterPro"/>
</dbReference>
<dbReference type="GO" id="GO:0046872">
    <property type="term" value="F:metal ion binding"/>
    <property type="evidence" value="ECO:0007669"/>
    <property type="project" value="UniProtKB-KW"/>
</dbReference>
<dbReference type="GO" id="GO:0008121">
    <property type="term" value="F:ubiquinol-cytochrome-c reductase activity"/>
    <property type="evidence" value="ECO:0007669"/>
    <property type="project" value="InterPro"/>
</dbReference>
<dbReference type="GO" id="GO:0006122">
    <property type="term" value="P:mitochondrial electron transport, ubiquinol to cytochrome c"/>
    <property type="evidence" value="ECO:0007669"/>
    <property type="project" value="TreeGrafter"/>
</dbReference>
<dbReference type="CDD" id="cd00290">
    <property type="entry name" value="cytochrome_b_C"/>
    <property type="match status" value="1"/>
</dbReference>
<dbReference type="CDD" id="cd00284">
    <property type="entry name" value="Cytochrome_b_N"/>
    <property type="match status" value="1"/>
</dbReference>
<dbReference type="FunFam" id="1.20.810.10:FF:000002">
    <property type="entry name" value="Cytochrome b"/>
    <property type="match status" value="1"/>
</dbReference>
<dbReference type="Gene3D" id="1.20.810.10">
    <property type="entry name" value="Cytochrome Bc1 Complex, Chain C"/>
    <property type="match status" value="1"/>
</dbReference>
<dbReference type="InterPro" id="IPR005798">
    <property type="entry name" value="Cyt_b/b6_C"/>
</dbReference>
<dbReference type="InterPro" id="IPR036150">
    <property type="entry name" value="Cyt_b/b6_C_sf"/>
</dbReference>
<dbReference type="InterPro" id="IPR005797">
    <property type="entry name" value="Cyt_b/b6_N"/>
</dbReference>
<dbReference type="InterPro" id="IPR027387">
    <property type="entry name" value="Cytb/b6-like_sf"/>
</dbReference>
<dbReference type="InterPro" id="IPR030689">
    <property type="entry name" value="Cytochrome_b"/>
</dbReference>
<dbReference type="InterPro" id="IPR048260">
    <property type="entry name" value="Cytochrome_b_C_euk/bac"/>
</dbReference>
<dbReference type="InterPro" id="IPR048259">
    <property type="entry name" value="Cytochrome_b_N_euk/bac"/>
</dbReference>
<dbReference type="InterPro" id="IPR016174">
    <property type="entry name" value="Di-haem_cyt_TM"/>
</dbReference>
<dbReference type="PANTHER" id="PTHR19271">
    <property type="entry name" value="CYTOCHROME B"/>
    <property type="match status" value="1"/>
</dbReference>
<dbReference type="PANTHER" id="PTHR19271:SF16">
    <property type="entry name" value="CYTOCHROME B"/>
    <property type="match status" value="1"/>
</dbReference>
<dbReference type="Pfam" id="PF00032">
    <property type="entry name" value="Cytochrom_B_C"/>
    <property type="match status" value="1"/>
</dbReference>
<dbReference type="Pfam" id="PF00033">
    <property type="entry name" value="Cytochrome_B"/>
    <property type="match status" value="1"/>
</dbReference>
<dbReference type="PIRSF" id="PIRSF038885">
    <property type="entry name" value="COB"/>
    <property type="match status" value="1"/>
</dbReference>
<dbReference type="SUPFAM" id="SSF81648">
    <property type="entry name" value="a domain/subunit of cytochrome bc1 complex (Ubiquinol-cytochrome c reductase)"/>
    <property type="match status" value="1"/>
</dbReference>
<dbReference type="SUPFAM" id="SSF81342">
    <property type="entry name" value="Transmembrane di-heme cytochromes"/>
    <property type="match status" value="1"/>
</dbReference>
<dbReference type="PROSITE" id="PS51003">
    <property type="entry name" value="CYTB_CTER"/>
    <property type="match status" value="1"/>
</dbReference>
<dbReference type="PROSITE" id="PS51002">
    <property type="entry name" value="CYTB_NTER"/>
    <property type="match status" value="1"/>
</dbReference>
<protein>
    <recommendedName>
        <fullName>Cytochrome b</fullName>
    </recommendedName>
    <alternativeName>
        <fullName>Complex III subunit 3</fullName>
    </alternativeName>
    <alternativeName>
        <fullName>Complex III subunit III</fullName>
    </alternativeName>
    <alternativeName>
        <fullName>Cytochrome b-c1 complex subunit 3</fullName>
    </alternativeName>
    <alternativeName>
        <fullName>Ubiquinol-cytochrome-c reductase complex cytochrome b subunit</fullName>
    </alternativeName>
</protein>
<gene>
    <name type="primary">MT-CYB</name>
    <name type="synonym">COB</name>
    <name type="synonym">CYTB</name>
    <name type="synonym">MTCYB</name>
</gene>
<keyword id="KW-0249">Electron transport</keyword>
<keyword id="KW-0349">Heme</keyword>
<keyword id="KW-0408">Iron</keyword>
<keyword id="KW-0472">Membrane</keyword>
<keyword id="KW-0479">Metal-binding</keyword>
<keyword id="KW-0496">Mitochondrion</keyword>
<keyword id="KW-0999">Mitochondrion inner membrane</keyword>
<keyword id="KW-0679">Respiratory chain</keyword>
<keyword id="KW-0812">Transmembrane</keyword>
<keyword id="KW-1133">Transmembrane helix</keyword>
<keyword id="KW-0813">Transport</keyword>
<keyword id="KW-0830">Ubiquinone</keyword>